<comment type="similarity">
    <text evidence="1">Belongs to the universal ribosomal protein uL29 family.</text>
</comment>
<evidence type="ECO:0000305" key="1"/>
<feature type="chain" id="PRO_0000130509" description="Large ribosomal subunit protein uL29">
    <location>
        <begin position="1"/>
        <end position="71"/>
    </location>
</feature>
<proteinExistence type="inferred from homology"/>
<dbReference type="EMBL" id="AB006961">
    <property type="protein sequence ID" value="BAA22277.1"/>
    <property type="molecule type" value="Genomic_DNA"/>
</dbReference>
<dbReference type="EMBL" id="AE004437">
    <property type="protein sequence ID" value="AAG19943.1"/>
    <property type="molecule type" value="Genomic_DNA"/>
</dbReference>
<dbReference type="PIR" id="C84322">
    <property type="entry name" value="C84322"/>
</dbReference>
<dbReference type="PIR" id="S11599">
    <property type="entry name" value="S11599"/>
</dbReference>
<dbReference type="SMR" id="P22665"/>
<dbReference type="FunCoup" id="P22665">
    <property type="interactions" value="113"/>
</dbReference>
<dbReference type="STRING" id="64091.VNG_1698G"/>
<dbReference type="PaxDb" id="64091-VNG_1698G"/>
<dbReference type="KEGG" id="hal:VNG_1698G"/>
<dbReference type="PATRIC" id="fig|64091.14.peg.1295"/>
<dbReference type="HOGENOM" id="CLU_158491_2_2_2"/>
<dbReference type="InParanoid" id="P22665"/>
<dbReference type="OrthoDB" id="11736at2157"/>
<dbReference type="PhylomeDB" id="P22665"/>
<dbReference type="Proteomes" id="UP000000554">
    <property type="component" value="Chromosome"/>
</dbReference>
<dbReference type="GO" id="GO:0022625">
    <property type="term" value="C:cytosolic large ribosomal subunit"/>
    <property type="evidence" value="ECO:0000318"/>
    <property type="project" value="GO_Central"/>
</dbReference>
<dbReference type="GO" id="GO:0003735">
    <property type="term" value="F:structural constituent of ribosome"/>
    <property type="evidence" value="ECO:0007669"/>
    <property type="project" value="InterPro"/>
</dbReference>
<dbReference type="GO" id="GO:0006412">
    <property type="term" value="P:translation"/>
    <property type="evidence" value="ECO:0007669"/>
    <property type="project" value="UniProtKB-UniRule"/>
</dbReference>
<dbReference type="FunFam" id="1.10.287.310:FF:000001">
    <property type="entry name" value="50S ribosomal protein L29"/>
    <property type="match status" value="1"/>
</dbReference>
<dbReference type="Gene3D" id="1.10.287.310">
    <property type="match status" value="1"/>
</dbReference>
<dbReference type="HAMAP" id="MF_00374">
    <property type="entry name" value="Ribosomal_uL29"/>
    <property type="match status" value="1"/>
</dbReference>
<dbReference type="InterPro" id="IPR050063">
    <property type="entry name" value="Ribosomal_protein_uL29"/>
</dbReference>
<dbReference type="InterPro" id="IPR001854">
    <property type="entry name" value="Ribosomal_uL29"/>
</dbReference>
<dbReference type="InterPro" id="IPR018254">
    <property type="entry name" value="Ribosomal_uL29_CS"/>
</dbReference>
<dbReference type="InterPro" id="IPR036049">
    <property type="entry name" value="Ribosomal_uL29_sf"/>
</dbReference>
<dbReference type="NCBIfam" id="TIGR00012">
    <property type="entry name" value="L29"/>
    <property type="match status" value="1"/>
</dbReference>
<dbReference type="PANTHER" id="PTHR10916">
    <property type="entry name" value="60S RIBOSOMAL PROTEIN L35/50S RIBOSOMAL PROTEIN L29"/>
    <property type="match status" value="1"/>
</dbReference>
<dbReference type="PANTHER" id="PTHR10916:SF0">
    <property type="entry name" value="LARGE RIBOSOMAL SUBUNIT PROTEIN UL29C"/>
    <property type="match status" value="1"/>
</dbReference>
<dbReference type="Pfam" id="PF00831">
    <property type="entry name" value="Ribosomal_L29"/>
    <property type="match status" value="1"/>
</dbReference>
<dbReference type="SUPFAM" id="SSF46561">
    <property type="entry name" value="Ribosomal protein L29 (L29p)"/>
    <property type="match status" value="1"/>
</dbReference>
<dbReference type="PROSITE" id="PS00579">
    <property type="entry name" value="RIBOSOMAL_L29"/>
    <property type="match status" value="1"/>
</dbReference>
<keyword id="KW-1185">Reference proteome</keyword>
<keyword id="KW-0687">Ribonucleoprotein</keyword>
<keyword id="KW-0689">Ribosomal protein</keyword>
<accession>P22665</accession>
<accession>Q9HPC7</accession>
<sequence length="71" mass="7884">MAILYTSEIRDMTPAEREAELEELRTELLNSKAVKAAGGAPDNPGRISELRKTIARIKTVQREEGDLADDE</sequence>
<organism>
    <name type="scientific">Halobacterium salinarum (strain ATCC 700922 / JCM 11081 / NRC-1)</name>
    <name type="common">Halobacterium halobium</name>
    <dbReference type="NCBI Taxonomy" id="64091"/>
    <lineage>
        <taxon>Archaea</taxon>
        <taxon>Methanobacteriati</taxon>
        <taxon>Methanobacteriota</taxon>
        <taxon>Stenosarchaea group</taxon>
        <taxon>Halobacteria</taxon>
        <taxon>Halobacteriales</taxon>
        <taxon>Halobacteriaceae</taxon>
        <taxon>Halobacterium</taxon>
        <taxon>Halobacterium salinarum NRC-34001</taxon>
    </lineage>
</organism>
<protein>
    <recommendedName>
        <fullName evidence="1">Large ribosomal subunit protein uL29</fullName>
    </recommendedName>
    <alternativeName>
        <fullName>50S ribosomal protein L29</fullName>
    </alternativeName>
    <alternativeName>
        <fullName>HHAL29</fullName>
    </alternativeName>
</protein>
<reference key="1">
    <citation type="journal article" date="1989" name="Can. J. Microbiol.">
        <title>Ribosomal protein gene cluster of Halobacterium halobium: nucleotide sequence of the genes coding for S3 and L29 equivalent ribosomal proteins.</title>
        <authorList>
            <person name="Spiridonova V.A."/>
            <person name="Akhmanova A.S."/>
            <person name="Kagramanova V.K."/>
            <person name="Koepke A.K.E."/>
            <person name="Mankin A.S."/>
        </authorList>
    </citation>
    <scope>NUCLEOTIDE SEQUENCE [GENOMIC DNA]</scope>
</reference>
<reference key="2">
    <citation type="journal article" date="1996" name="Biochem. Mol. Biol. Int.">
        <title>Organization and nucleotide sequences of ten ribosomal protein genes from the region equivalent to the S10 operon in the archaebacterium, Halobacterium halobium.</title>
        <authorList>
            <person name="Miyokawa T."/>
            <person name="Urayama T."/>
            <person name="Shimooka K."/>
            <person name="Itoh T."/>
        </authorList>
    </citation>
    <scope>NUCLEOTIDE SEQUENCE [GENOMIC DNA]</scope>
</reference>
<reference key="3">
    <citation type="journal article" date="2000" name="Proc. Natl. Acad. Sci. U.S.A.">
        <title>Genome sequence of Halobacterium species NRC-1.</title>
        <authorList>
            <person name="Ng W.V."/>
            <person name="Kennedy S.P."/>
            <person name="Mahairas G.G."/>
            <person name="Berquist B."/>
            <person name="Pan M."/>
            <person name="Shukla H.D."/>
            <person name="Lasky S.R."/>
            <person name="Baliga N.S."/>
            <person name="Thorsson V."/>
            <person name="Sbrogna J."/>
            <person name="Swartzell S."/>
            <person name="Weir D."/>
            <person name="Hall J."/>
            <person name="Dahl T.A."/>
            <person name="Welti R."/>
            <person name="Goo Y.A."/>
            <person name="Leithauser B."/>
            <person name="Keller K."/>
            <person name="Cruz R."/>
            <person name="Danson M.J."/>
            <person name="Hough D.W."/>
            <person name="Maddocks D.G."/>
            <person name="Jablonski P.E."/>
            <person name="Krebs M.P."/>
            <person name="Angevine C.M."/>
            <person name="Dale H."/>
            <person name="Isenbarger T.A."/>
            <person name="Peck R.F."/>
            <person name="Pohlschroder M."/>
            <person name="Spudich J.L."/>
            <person name="Jung K.-H."/>
            <person name="Alam M."/>
            <person name="Freitas T."/>
            <person name="Hou S."/>
            <person name="Daniels C.J."/>
            <person name="Dennis P.P."/>
            <person name="Omer A.D."/>
            <person name="Ebhardt H."/>
            <person name="Lowe T.M."/>
            <person name="Liang P."/>
            <person name="Riley M."/>
            <person name="Hood L."/>
            <person name="DasSarma S."/>
        </authorList>
    </citation>
    <scope>NUCLEOTIDE SEQUENCE [LARGE SCALE GENOMIC DNA]</scope>
    <source>
        <strain>ATCC 700922 / JCM 11081 / NRC-1</strain>
    </source>
</reference>
<gene>
    <name type="primary">rpl29</name>
    <name type="ordered locus">VNG_1698G</name>
</gene>
<name>RL29_HALSA</name>